<reference key="1">
    <citation type="journal article" date="2011" name="Stand. Genomic Sci.">
        <title>Complete genome sequence of the filamentous gliding predatory bacterium Herpetosiphon aurantiacus type strain (114-95(T)).</title>
        <authorList>
            <person name="Kiss H."/>
            <person name="Nett M."/>
            <person name="Domin N."/>
            <person name="Martin K."/>
            <person name="Maresca J.A."/>
            <person name="Copeland A."/>
            <person name="Lapidus A."/>
            <person name="Lucas S."/>
            <person name="Berry K.W."/>
            <person name="Glavina Del Rio T."/>
            <person name="Dalin E."/>
            <person name="Tice H."/>
            <person name="Pitluck S."/>
            <person name="Richardson P."/>
            <person name="Bruce D."/>
            <person name="Goodwin L."/>
            <person name="Han C."/>
            <person name="Detter J.C."/>
            <person name="Schmutz J."/>
            <person name="Brettin T."/>
            <person name="Land M."/>
            <person name="Hauser L."/>
            <person name="Kyrpides N.C."/>
            <person name="Ivanova N."/>
            <person name="Goeker M."/>
            <person name="Woyke T."/>
            <person name="Klenk H.P."/>
            <person name="Bryant D.A."/>
        </authorList>
    </citation>
    <scope>NUCLEOTIDE SEQUENCE [LARGE SCALE GENOMIC DNA]</scope>
    <source>
        <strain>ATCC 23779 / DSM 785 / 114-95</strain>
    </source>
</reference>
<protein>
    <recommendedName>
        <fullName evidence="1">Large ribosomal subunit protein uL22</fullName>
    </recommendedName>
    <alternativeName>
        <fullName evidence="2">50S ribosomal protein L22</fullName>
    </alternativeName>
</protein>
<keyword id="KW-0687">Ribonucleoprotein</keyword>
<keyword id="KW-0689">Ribosomal protein</keyword>
<keyword id="KW-0694">RNA-binding</keyword>
<keyword id="KW-0699">rRNA-binding</keyword>
<evidence type="ECO:0000255" key="1">
    <source>
        <dbReference type="HAMAP-Rule" id="MF_01331"/>
    </source>
</evidence>
<evidence type="ECO:0000305" key="2"/>
<organism>
    <name type="scientific">Herpetosiphon aurantiacus (strain ATCC 23779 / DSM 785 / 114-95)</name>
    <dbReference type="NCBI Taxonomy" id="316274"/>
    <lineage>
        <taxon>Bacteria</taxon>
        <taxon>Bacillati</taxon>
        <taxon>Chloroflexota</taxon>
        <taxon>Chloroflexia</taxon>
        <taxon>Herpetosiphonales</taxon>
        <taxon>Herpetosiphonaceae</taxon>
        <taxon>Herpetosiphon</taxon>
    </lineage>
</organism>
<gene>
    <name evidence="1" type="primary">rplV</name>
    <name type="ordered locus">Haur_4920</name>
</gene>
<proteinExistence type="inferred from homology"/>
<dbReference type="EMBL" id="CP000875">
    <property type="protein sequence ID" value="ABX07550.1"/>
    <property type="molecule type" value="Genomic_DNA"/>
</dbReference>
<dbReference type="SMR" id="A9B417"/>
<dbReference type="FunCoup" id="A9B417">
    <property type="interactions" value="482"/>
</dbReference>
<dbReference type="STRING" id="316274.Haur_4920"/>
<dbReference type="KEGG" id="hau:Haur_4920"/>
<dbReference type="eggNOG" id="COG0091">
    <property type="taxonomic scope" value="Bacteria"/>
</dbReference>
<dbReference type="HOGENOM" id="CLU_083987_3_3_0"/>
<dbReference type="InParanoid" id="A9B417"/>
<dbReference type="Proteomes" id="UP000000787">
    <property type="component" value="Chromosome"/>
</dbReference>
<dbReference type="GO" id="GO:0022625">
    <property type="term" value="C:cytosolic large ribosomal subunit"/>
    <property type="evidence" value="ECO:0007669"/>
    <property type="project" value="TreeGrafter"/>
</dbReference>
<dbReference type="GO" id="GO:0019843">
    <property type="term" value="F:rRNA binding"/>
    <property type="evidence" value="ECO:0007669"/>
    <property type="project" value="UniProtKB-UniRule"/>
</dbReference>
<dbReference type="GO" id="GO:0003735">
    <property type="term" value="F:structural constituent of ribosome"/>
    <property type="evidence" value="ECO:0007669"/>
    <property type="project" value="InterPro"/>
</dbReference>
<dbReference type="GO" id="GO:0006412">
    <property type="term" value="P:translation"/>
    <property type="evidence" value="ECO:0007669"/>
    <property type="project" value="UniProtKB-UniRule"/>
</dbReference>
<dbReference type="CDD" id="cd00336">
    <property type="entry name" value="Ribosomal_L22"/>
    <property type="match status" value="1"/>
</dbReference>
<dbReference type="Gene3D" id="3.90.470.10">
    <property type="entry name" value="Ribosomal protein L22/L17"/>
    <property type="match status" value="1"/>
</dbReference>
<dbReference type="HAMAP" id="MF_01331_B">
    <property type="entry name" value="Ribosomal_uL22_B"/>
    <property type="match status" value="1"/>
</dbReference>
<dbReference type="InterPro" id="IPR001063">
    <property type="entry name" value="Ribosomal_uL22"/>
</dbReference>
<dbReference type="InterPro" id="IPR005727">
    <property type="entry name" value="Ribosomal_uL22_bac/chlpt-type"/>
</dbReference>
<dbReference type="InterPro" id="IPR047867">
    <property type="entry name" value="Ribosomal_uL22_bac/org-type"/>
</dbReference>
<dbReference type="InterPro" id="IPR018260">
    <property type="entry name" value="Ribosomal_uL22_CS"/>
</dbReference>
<dbReference type="InterPro" id="IPR036394">
    <property type="entry name" value="Ribosomal_uL22_sf"/>
</dbReference>
<dbReference type="NCBIfam" id="TIGR01044">
    <property type="entry name" value="rplV_bact"/>
    <property type="match status" value="1"/>
</dbReference>
<dbReference type="PANTHER" id="PTHR13501">
    <property type="entry name" value="CHLOROPLAST 50S RIBOSOMAL PROTEIN L22-RELATED"/>
    <property type="match status" value="1"/>
</dbReference>
<dbReference type="PANTHER" id="PTHR13501:SF8">
    <property type="entry name" value="LARGE RIBOSOMAL SUBUNIT PROTEIN UL22M"/>
    <property type="match status" value="1"/>
</dbReference>
<dbReference type="Pfam" id="PF00237">
    <property type="entry name" value="Ribosomal_L22"/>
    <property type="match status" value="1"/>
</dbReference>
<dbReference type="SUPFAM" id="SSF54843">
    <property type="entry name" value="Ribosomal protein L22"/>
    <property type="match status" value="1"/>
</dbReference>
<dbReference type="PROSITE" id="PS00464">
    <property type="entry name" value="RIBOSOMAL_L22"/>
    <property type="match status" value="1"/>
</dbReference>
<feature type="chain" id="PRO_1000166066" description="Large ribosomal subunit protein uL22">
    <location>
        <begin position="1"/>
        <end position="113"/>
    </location>
</feature>
<sequence>MQAKAILRNFRMSPQKVRLVADLVRGKNVTEALGILQYLPHKAAPEIARVIKSAKANADHNYQMSPEDLVVKTIMVDAGPVLKRYMPRARGRGDRILKRSSHITVIVDDGEVL</sequence>
<accession>A9B417</accession>
<comment type="function">
    <text evidence="1">This protein binds specifically to 23S rRNA; its binding is stimulated by other ribosomal proteins, e.g. L4, L17, and L20. It is important during the early stages of 50S assembly. It makes multiple contacts with different domains of the 23S rRNA in the assembled 50S subunit and ribosome (By similarity).</text>
</comment>
<comment type="function">
    <text evidence="1">The globular domain of the protein is located near the polypeptide exit tunnel on the outside of the subunit, while an extended beta-hairpin is found that lines the wall of the exit tunnel in the center of the 70S ribosome.</text>
</comment>
<comment type="subunit">
    <text evidence="1">Part of the 50S ribosomal subunit.</text>
</comment>
<comment type="similarity">
    <text evidence="1">Belongs to the universal ribosomal protein uL22 family.</text>
</comment>
<name>RL22_HERA2</name>